<name>DCUP_DELAS</name>
<accession>A9BPZ7</accession>
<reference key="1">
    <citation type="submission" date="2007-11" db="EMBL/GenBank/DDBJ databases">
        <title>Complete sequence of Delftia acidovorans DSM 14801 / SPH-1.</title>
        <authorList>
            <person name="Copeland A."/>
            <person name="Lucas S."/>
            <person name="Lapidus A."/>
            <person name="Barry K."/>
            <person name="Glavina del Rio T."/>
            <person name="Dalin E."/>
            <person name="Tice H."/>
            <person name="Pitluck S."/>
            <person name="Lowry S."/>
            <person name="Clum A."/>
            <person name="Schmutz J."/>
            <person name="Larimer F."/>
            <person name="Land M."/>
            <person name="Hauser L."/>
            <person name="Kyrpides N."/>
            <person name="Kim E."/>
            <person name="Schleheck D."/>
            <person name="Richardson P."/>
        </authorList>
    </citation>
    <scope>NUCLEOTIDE SEQUENCE [LARGE SCALE GENOMIC DNA]</scope>
    <source>
        <strain>DSM 14801 / SPH-1</strain>
    </source>
</reference>
<dbReference type="EC" id="4.1.1.37" evidence="1"/>
<dbReference type="EMBL" id="CP000884">
    <property type="protein sequence ID" value="ABX33212.1"/>
    <property type="molecule type" value="Genomic_DNA"/>
</dbReference>
<dbReference type="RefSeq" id="WP_012202498.1">
    <property type="nucleotide sequence ID" value="NC_010002.1"/>
</dbReference>
<dbReference type="SMR" id="A9BPZ7"/>
<dbReference type="STRING" id="398578.Daci_0566"/>
<dbReference type="GeneID" id="24116403"/>
<dbReference type="KEGG" id="dac:Daci_0566"/>
<dbReference type="eggNOG" id="COG0407">
    <property type="taxonomic scope" value="Bacteria"/>
</dbReference>
<dbReference type="HOGENOM" id="CLU_040933_0_0_4"/>
<dbReference type="UniPathway" id="UPA00251">
    <property type="reaction ID" value="UER00321"/>
</dbReference>
<dbReference type="Proteomes" id="UP000000784">
    <property type="component" value="Chromosome"/>
</dbReference>
<dbReference type="GO" id="GO:0005829">
    <property type="term" value="C:cytosol"/>
    <property type="evidence" value="ECO:0007669"/>
    <property type="project" value="TreeGrafter"/>
</dbReference>
<dbReference type="GO" id="GO:0004853">
    <property type="term" value="F:uroporphyrinogen decarboxylase activity"/>
    <property type="evidence" value="ECO:0007669"/>
    <property type="project" value="UniProtKB-UniRule"/>
</dbReference>
<dbReference type="GO" id="GO:0019353">
    <property type="term" value="P:protoporphyrinogen IX biosynthetic process from glutamate"/>
    <property type="evidence" value="ECO:0007669"/>
    <property type="project" value="TreeGrafter"/>
</dbReference>
<dbReference type="CDD" id="cd00717">
    <property type="entry name" value="URO-D"/>
    <property type="match status" value="1"/>
</dbReference>
<dbReference type="FunFam" id="3.20.20.210:FF:000001">
    <property type="entry name" value="Uroporphyrinogen decarboxylase"/>
    <property type="match status" value="1"/>
</dbReference>
<dbReference type="Gene3D" id="3.20.20.210">
    <property type="match status" value="1"/>
</dbReference>
<dbReference type="HAMAP" id="MF_00218">
    <property type="entry name" value="URO_D"/>
    <property type="match status" value="1"/>
</dbReference>
<dbReference type="InterPro" id="IPR038071">
    <property type="entry name" value="UROD/MetE-like_sf"/>
</dbReference>
<dbReference type="InterPro" id="IPR006361">
    <property type="entry name" value="Uroporphyrinogen_deCO2ase_HemE"/>
</dbReference>
<dbReference type="InterPro" id="IPR000257">
    <property type="entry name" value="Uroporphyrinogen_deCOase"/>
</dbReference>
<dbReference type="NCBIfam" id="TIGR01464">
    <property type="entry name" value="hemE"/>
    <property type="match status" value="1"/>
</dbReference>
<dbReference type="PANTHER" id="PTHR21091">
    <property type="entry name" value="METHYLTETRAHYDROFOLATE:HOMOCYSTEINE METHYLTRANSFERASE RELATED"/>
    <property type="match status" value="1"/>
</dbReference>
<dbReference type="PANTHER" id="PTHR21091:SF169">
    <property type="entry name" value="UROPORPHYRINOGEN DECARBOXYLASE"/>
    <property type="match status" value="1"/>
</dbReference>
<dbReference type="Pfam" id="PF01208">
    <property type="entry name" value="URO-D"/>
    <property type="match status" value="1"/>
</dbReference>
<dbReference type="SUPFAM" id="SSF51726">
    <property type="entry name" value="UROD/MetE-like"/>
    <property type="match status" value="1"/>
</dbReference>
<dbReference type="PROSITE" id="PS00906">
    <property type="entry name" value="UROD_1"/>
    <property type="match status" value="1"/>
</dbReference>
<dbReference type="PROSITE" id="PS00907">
    <property type="entry name" value="UROD_2"/>
    <property type="match status" value="1"/>
</dbReference>
<feature type="chain" id="PRO_1000099988" description="Uroporphyrinogen decarboxylase">
    <location>
        <begin position="1"/>
        <end position="370"/>
    </location>
</feature>
<feature type="binding site" evidence="1">
    <location>
        <begin position="29"/>
        <end position="33"/>
    </location>
    <ligand>
        <name>substrate</name>
    </ligand>
</feature>
<feature type="binding site" evidence="1">
    <location>
        <position position="79"/>
    </location>
    <ligand>
        <name>substrate</name>
    </ligand>
</feature>
<feature type="binding site" evidence="1">
    <location>
        <position position="155"/>
    </location>
    <ligand>
        <name>substrate</name>
    </ligand>
</feature>
<feature type="binding site" evidence="1">
    <location>
        <position position="210"/>
    </location>
    <ligand>
        <name>substrate</name>
    </ligand>
</feature>
<feature type="binding site" evidence="1">
    <location>
        <position position="342"/>
    </location>
    <ligand>
        <name>substrate</name>
    </ligand>
</feature>
<feature type="site" description="Transition state stabilizer" evidence="1">
    <location>
        <position position="79"/>
    </location>
</feature>
<sequence>MSFAPLTNDTFLRACRRQATDYTPLWLMRQAGRYLPEYKATRARAGSFMGLATNVDYATEVTLQPLERFPLDAAILFSDILTVPDAMGLGLSFAEGEGPRFAKVVRDEAAVAELAVPDMDKLRYVFDAVTSIRRALDGRVPLIGFSGSPWTLACYMVEGKGSDDYRLVKSLMYARPDLMHRILAINADSVAAYLNAQIDAGAQAVMVFDSWGGVLADGAFQEFSLAYTKRVLAGLNRTGADGQDVPRIVFTKGGGIWLPDMKDLDCEVLGLDWTANLARARAIVGGEVGGPGKALQGNIDPNVLFAPPERVAEQARAVLDSFGAPHTDRTTTGPTHIFNLGHGISQFTPPEHVAALVETVHSHSRALRQR</sequence>
<gene>
    <name evidence="1" type="primary">hemE</name>
    <name type="ordered locus">Daci_0566</name>
</gene>
<comment type="function">
    <text evidence="1">Catalyzes the decarboxylation of four acetate groups of uroporphyrinogen-III to yield coproporphyrinogen-III.</text>
</comment>
<comment type="catalytic activity">
    <reaction evidence="1">
        <text>uroporphyrinogen III + 4 H(+) = coproporphyrinogen III + 4 CO2</text>
        <dbReference type="Rhea" id="RHEA:19865"/>
        <dbReference type="ChEBI" id="CHEBI:15378"/>
        <dbReference type="ChEBI" id="CHEBI:16526"/>
        <dbReference type="ChEBI" id="CHEBI:57308"/>
        <dbReference type="ChEBI" id="CHEBI:57309"/>
        <dbReference type="EC" id="4.1.1.37"/>
    </reaction>
</comment>
<comment type="pathway">
    <text evidence="1">Porphyrin-containing compound metabolism; protoporphyrin-IX biosynthesis; coproporphyrinogen-III from 5-aminolevulinate: step 4/4.</text>
</comment>
<comment type="subunit">
    <text evidence="1">Homodimer.</text>
</comment>
<comment type="subcellular location">
    <subcellularLocation>
        <location evidence="1">Cytoplasm</location>
    </subcellularLocation>
</comment>
<comment type="similarity">
    <text evidence="1">Belongs to the uroporphyrinogen decarboxylase family.</text>
</comment>
<organism>
    <name type="scientific">Delftia acidovorans (strain DSM 14801 / SPH-1)</name>
    <dbReference type="NCBI Taxonomy" id="398578"/>
    <lineage>
        <taxon>Bacteria</taxon>
        <taxon>Pseudomonadati</taxon>
        <taxon>Pseudomonadota</taxon>
        <taxon>Betaproteobacteria</taxon>
        <taxon>Burkholderiales</taxon>
        <taxon>Comamonadaceae</taxon>
        <taxon>Delftia</taxon>
    </lineage>
</organism>
<protein>
    <recommendedName>
        <fullName evidence="1">Uroporphyrinogen decarboxylase</fullName>
        <shortName evidence="1">UPD</shortName>
        <shortName evidence="1">URO-D</shortName>
        <ecNumber evidence="1">4.1.1.37</ecNumber>
    </recommendedName>
</protein>
<evidence type="ECO:0000255" key="1">
    <source>
        <dbReference type="HAMAP-Rule" id="MF_00218"/>
    </source>
</evidence>
<proteinExistence type="inferred from homology"/>
<keyword id="KW-0963">Cytoplasm</keyword>
<keyword id="KW-0210">Decarboxylase</keyword>
<keyword id="KW-0456">Lyase</keyword>
<keyword id="KW-0627">Porphyrin biosynthesis</keyword>
<keyword id="KW-1185">Reference proteome</keyword>